<proteinExistence type="evidence at transcript level"/>
<name>YSL4_ARATH</name>
<evidence type="ECO:0000250" key="1"/>
<evidence type="ECO:0000255" key="2"/>
<evidence type="ECO:0000269" key="3">
    <source>
    </source>
</evidence>
<evidence type="ECO:0000305" key="4"/>
<protein>
    <recommendedName>
        <fullName>Probable metal-nicotianamine transporter YSL4</fullName>
    </recommendedName>
    <alternativeName>
        <fullName>Protein YELLOW STRIPE LIKE 4</fullName>
        <shortName>AtYSL4</shortName>
    </alternativeName>
</protein>
<accession>Q6R3K8</accession>
<accession>Q9FLM9</accession>
<comment type="function">
    <text evidence="1">May be involved in the transport of nicotianamine-chelated metals.</text>
</comment>
<comment type="subcellular location">
    <subcellularLocation>
        <location evidence="4">Membrane</location>
        <topology evidence="4">Multi-pass membrane protein</topology>
    </subcellularLocation>
</comment>
<comment type="developmental stage">
    <text evidence="3">Induced during senescence.</text>
</comment>
<comment type="miscellaneous">
    <text>Up-regulated in autophagy mutant.</text>
</comment>
<comment type="similarity">
    <text evidence="4">Belongs to the YSL (TC 2.A.67.2) family.</text>
</comment>
<comment type="sequence caution" evidence="4">
    <conflict type="erroneous gene model prediction">
        <sequence resource="EMBL-CDS" id="BAB09702"/>
    </conflict>
</comment>
<gene>
    <name type="primary">YSL4</name>
    <name type="ordered locus">At5g41000</name>
    <name type="ORF">MEE6.7</name>
</gene>
<feature type="chain" id="PRO_0000311415" description="Probable metal-nicotianamine transporter YSL4">
    <location>
        <begin position="1"/>
        <end position="670"/>
    </location>
</feature>
<feature type="transmembrane region" description="Helical" evidence="2">
    <location>
        <begin position="35"/>
        <end position="55"/>
    </location>
</feature>
<feature type="transmembrane region" description="Helical" evidence="2">
    <location>
        <begin position="59"/>
        <end position="79"/>
    </location>
</feature>
<feature type="transmembrane region" description="Helical" evidence="2">
    <location>
        <begin position="107"/>
        <end position="127"/>
    </location>
</feature>
<feature type="transmembrane region" description="Helical" evidence="2">
    <location>
        <begin position="151"/>
        <end position="171"/>
    </location>
</feature>
<feature type="transmembrane region" description="Helical" evidence="2">
    <location>
        <begin position="273"/>
        <end position="293"/>
    </location>
</feature>
<feature type="transmembrane region" description="Helical" evidence="2">
    <location>
        <begin position="318"/>
        <end position="338"/>
    </location>
</feature>
<feature type="transmembrane region" description="Helical" evidence="2">
    <location>
        <begin position="389"/>
        <end position="409"/>
    </location>
</feature>
<feature type="transmembrane region" description="Helical" evidence="2">
    <location>
        <begin position="416"/>
        <end position="436"/>
    </location>
</feature>
<feature type="transmembrane region" description="Helical" evidence="2">
    <location>
        <begin position="450"/>
        <end position="470"/>
    </location>
</feature>
<feature type="transmembrane region" description="Helical" evidence="2">
    <location>
        <begin position="507"/>
        <end position="527"/>
    </location>
</feature>
<feature type="transmembrane region" description="Helical" evidence="2">
    <location>
        <begin position="559"/>
        <end position="579"/>
    </location>
</feature>
<feature type="transmembrane region" description="Helical" evidence="2">
    <location>
        <begin position="601"/>
        <end position="621"/>
    </location>
</feature>
<feature type="transmembrane region" description="Helical" evidence="2">
    <location>
        <begin position="636"/>
        <end position="656"/>
    </location>
</feature>
<reference key="1">
    <citation type="submission" date="2003-12" db="EMBL/GenBank/DDBJ databases">
        <title>The yellow stripe-like (YSL) family of metal-nicotianamine transporters.</title>
        <authorList>
            <person name="Roberts L.A."/>
            <person name="Walker E.L."/>
        </authorList>
    </citation>
    <scope>NUCLEOTIDE SEQUENCE [MRNA]</scope>
</reference>
<reference key="2">
    <citation type="journal article" date="1998" name="DNA Res.">
        <title>Structural analysis of Arabidopsis thaliana chromosome 5. IV. Sequence features of the regions of 1,456,315 bp covered by nineteen physically assigned P1 and TAC clones.</title>
        <authorList>
            <person name="Sato S."/>
            <person name="Kaneko T."/>
            <person name="Kotani H."/>
            <person name="Nakamura Y."/>
            <person name="Asamizu E."/>
            <person name="Miyajima N."/>
            <person name="Tabata S."/>
        </authorList>
    </citation>
    <scope>NUCLEOTIDE SEQUENCE [LARGE SCALE GENOMIC DNA]</scope>
    <source>
        <strain>cv. Columbia</strain>
    </source>
</reference>
<reference key="3">
    <citation type="journal article" date="2017" name="Plant J.">
        <title>Araport11: a complete reannotation of the Arabidopsis thaliana reference genome.</title>
        <authorList>
            <person name="Cheng C.Y."/>
            <person name="Krishnakumar V."/>
            <person name="Chan A.P."/>
            <person name="Thibaud-Nissen F."/>
            <person name="Schobel S."/>
            <person name="Town C.D."/>
        </authorList>
    </citation>
    <scope>GENOME REANNOTATION</scope>
    <source>
        <strain>cv. Columbia</strain>
    </source>
</reference>
<reference key="4">
    <citation type="journal article" date="2002" name="Plant Physiol.">
        <title>Leaf senescence and starvation-induced chlorosis are accelerated by the disruption of an Arabidopsis autophagy gene.</title>
        <authorList>
            <person name="Hanaoka H."/>
            <person name="Noda T."/>
            <person name="Shirano Y."/>
            <person name="Kato T."/>
            <person name="Hayashi H."/>
            <person name="Shibata D."/>
            <person name="Tabata S."/>
            <person name="Ohsumi Y."/>
        </authorList>
    </citation>
    <scope>DEVELOPMENTAL STAGE</scope>
</reference>
<dbReference type="EMBL" id="AY515562">
    <property type="protein sequence ID" value="AAS00693.1"/>
    <property type="molecule type" value="mRNA"/>
</dbReference>
<dbReference type="EMBL" id="AB010072">
    <property type="protein sequence ID" value="BAB09702.1"/>
    <property type="status" value="ALT_SEQ"/>
    <property type="molecule type" value="Genomic_DNA"/>
</dbReference>
<dbReference type="EMBL" id="CP002688">
    <property type="protein sequence ID" value="AED94624.1"/>
    <property type="molecule type" value="Genomic_DNA"/>
</dbReference>
<dbReference type="RefSeq" id="NP_198916.2">
    <property type="nucleotide sequence ID" value="NM_123465.4"/>
</dbReference>
<dbReference type="SMR" id="Q6R3K8"/>
<dbReference type="FunCoup" id="Q6R3K8">
    <property type="interactions" value="594"/>
</dbReference>
<dbReference type="STRING" id="3702.Q6R3K8"/>
<dbReference type="TCDB" id="2.A.67.2.12">
    <property type="family name" value="the oligopeptide transporter (opt) family"/>
</dbReference>
<dbReference type="PaxDb" id="3702-AT5G41000.1"/>
<dbReference type="ProteomicsDB" id="242354"/>
<dbReference type="EnsemblPlants" id="AT5G41000.1">
    <property type="protein sequence ID" value="AT5G41000.1"/>
    <property type="gene ID" value="AT5G41000"/>
</dbReference>
<dbReference type="GeneID" id="834102"/>
<dbReference type="Gramene" id="AT5G41000.1">
    <property type="protein sequence ID" value="AT5G41000.1"/>
    <property type="gene ID" value="AT5G41000"/>
</dbReference>
<dbReference type="KEGG" id="ath:AT5G41000"/>
<dbReference type="Araport" id="AT5G41000"/>
<dbReference type="TAIR" id="AT5G41000">
    <property type="gene designation" value="YSL4"/>
</dbReference>
<dbReference type="eggNOG" id="ENOG502QQ2H">
    <property type="taxonomic scope" value="Eukaryota"/>
</dbReference>
<dbReference type="HOGENOM" id="CLU_015477_2_0_1"/>
<dbReference type="InParanoid" id="Q6R3K8"/>
<dbReference type="OMA" id="HCLTICC"/>
<dbReference type="PhylomeDB" id="Q6R3K8"/>
<dbReference type="PRO" id="PR:Q6R3K8"/>
<dbReference type="Proteomes" id="UP000006548">
    <property type="component" value="Chromosome 5"/>
</dbReference>
<dbReference type="ExpressionAtlas" id="Q6R3K8">
    <property type="expression patterns" value="baseline and differential"/>
</dbReference>
<dbReference type="GO" id="GO:0000325">
    <property type="term" value="C:plant-type vacuole"/>
    <property type="evidence" value="ECO:0007005"/>
    <property type="project" value="TAIR"/>
</dbReference>
<dbReference type="GO" id="GO:0009705">
    <property type="term" value="C:plant-type vacuole membrane"/>
    <property type="evidence" value="ECO:0000314"/>
    <property type="project" value="TAIR"/>
</dbReference>
<dbReference type="GO" id="GO:0035673">
    <property type="term" value="F:oligopeptide transmembrane transporter activity"/>
    <property type="evidence" value="ECO:0007669"/>
    <property type="project" value="InterPro"/>
</dbReference>
<dbReference type="GO" id="GO:0034755">
    <property type="term" value="P:iron ion transmembrane transport"/>
    <property type="evidence" value="ECO:0000316"/>
    <property type="project" value="TAIR"/>
</dbReference>
<dbReference type="InterPro" id="IPR004813">
    <property type="entry name" value="OPT"/>
</dbReference>
<dbReference type="InterPro" id="IPR045035">
    <property type="entry name" value="YSL-like"/>
</dbReference>
<dbReference type="NCBIfam" id="TIGR00728">
    <property type="entry name" value="OPT_sfam"/>
    <property type="match status" value="1"/>
</dbReference>
<dbReference type="PANTHER" id="PTHR31645:SF63">
    <property type="entry name" value="METAL-NICOTIANAMINE TRANSPORTER YSL4-RELATED"/>
    <property type="match status" value="1"/>
</dbReference>
<dbReference type="PANTHER" id="PTHR31645">
    <property type="entry name" value="OLIGOPEPTIDE TRANSPORTER YGL114W-RELATED"/>
    <property type="match status" value="1"/>
</dbReference>
<dbReference type="Pfam" id="PF03169">
    <property type="entry name" value="OPT"/>
    <property type="match status" value="1"/>
</dbReference>
<keyword id="KW-0472">Membrane</keyword>
<keyword id="KW-1185">Reference proteome</keyword>
<keyword id="KW-0812">Transmembrane</keyword>
<keyword id="KW-1133">Transmembrane helix</keyword>
<keyword id="KW-0813">Transport</keyword>
<organism>
    <name type="scientific">Arabidopsis thaliana</name>
    <name type="common">Mouse-ear cress</name>
    <dbReference type="NCBI Taxonomy" id="3702"/>
    <lineage>
        <taxon>Eukaryota</taxon>
        <taxon>Viridiplantae</taxon>
        <taxon>Streptophyta</taxon>
        <taxon>Embryophyta</taxon>
        <taxon>Tracheophyta</taxon>
        <taxon>Spermatophyta</taxon>
        <taxon>Magnoliopsida</taxon>
        <taxon>eudicotyledons</taxon>
        <taxon>Gunneridae</taxon>
        <taxon>Pentapetalae</taxon>
        <taxon>rosids</taxon>
        <taxon>malvids</taxon>
        <taxon>Brassicales</taxon>
        <taxon>Brassicaceae</taxon>
        <taxon>Camelineae</taxon>
        <taxon>Arabidopsis</taxon>
    </lineage>
</organism>
<sequence>METEIPRSTEISETLLLPETNLDHGEYVPEWKEQITIRGLISSALLGILFCIITHKLNLTIGIIPSLNVAAGLLGFFFIKSWTGFLSKLGFLSKPFTKQENTVIQTCVVSCYGLAYSGGFGSYLIAMDERTYKLIGSDYPGNNPEDVINPGLWWMTGFLFVVSFLGLFCLVPLRKVMILDYKLTYPSGTATAMLINSFHNNTGAELAGKQVKCLGKYLSLSLVWSCFKWFFSGIGGACGFDHFPTLGLTLFKNTFYFDFSPTFIGCGMICPHLVNCSVLLGAIISWGFLWPFISQHAGDWYPADLKANDFKGLYGYKVFIAISIILGDGLYNLIKIIVVTVKEICNKSSRQHNLPVFTDILDKSKTSVLMREKKKRDIIFLKDRIPLEFAVSGYVGLAAISTAIIPLIFPPLKWYFVLCSYLVAPGLAFCNSYGAGLTDMSMPSTYGKTGLFIVASIVGNNGGVIAGLAACGIMMSIVSTAADLMQDFKTGYLTLSSAKSMFVTQLLGTAMGCIIAPLTFWLFWTAFDIGDPDGLYKAPYAVIYREMAILGVEGFAKLPKHCLALCCGFFIAALIVNLIRDMTPPKISKLIPLPMAMAGPFYIGAYFAIDMFVGTVIMLVWERMNKKDADDYSGAVASGLICGDGIWTIPSAILSILRINPPICMYFRPS</sequence>